<accession>P34497</accession>
<name>GLNA_CAEEL</name>
<proteinExistence type="inferred from homology"/>
<feature type="chain" id="PRO_0000153147" description="Probable glutamine synthetase">
    <location>
        <begin position="1"/>
        <end position="367"/>
    </location>
</feature>
<feature type="domain" description="GS beta-grasp" evidence="2">
    <location>
        <begin position="30"/>
        <end position="110"/>
    </location>
</feature>
<feature type="domain" description="GS catalytic" evidence="3">
    <location>
        <begin position="117"/>
        <end position="367"/>
    </location>
</feature>
<protein>
    <recommendedName>
        <fullName>Probable glutamine synthetase</fullName>
        <ecNumber>6.3.1.2</ecNumber>
    </recommendedName>
    <alternativeName>
        <fullName>Glutamate--ammonia ligase</fullName>
    </alternativeName>
</protein>
<dbReference type="EC" id="6.3.1.2"/>
<dbReference type="EMBL" id="Z29560">
    <property type="protein sequence ID" value="CAA82655.1"/>
    <property type="molecule type" value="Genomic_DNA"/>
</dbReference>
<dbReference type="PIR" id="S41024">
    <property type="entry name" value="S41024"/>
</dbReference>
<dbReference type="RefSeq" id="NP_499208.1">
    <property type="nucleotide sequence ID" value="NM_066807.4"/>
</dbReference>
<dbReference type="SMR" id="P34497"/>
<dbReference type="BioGRID" id="41601">
    <property type="interactions" value="2"/>
</dbReference>
<dbReference type="FunCoup" id="P34497">
    <property type="interactions" value="224"/>
</dbReference>
<dbReference type="IntAct" id="P34497">
    <property type="interactions" value="2"/>
</dbReference>
<dbReference type="STRING" id="6239.K03H1.1.1"/>
<dbReference type="PaxDb" id="6239-K03H1.1"/>
<dbReference type="PeptideAtlas" id="P34497"/>
<dbReference type="EnsemblMetazoa" id="K03H1.1.1">
    <property type="protein sequence ID" value="K03H1.1.1"/>
    <property type="gene ID" value="WBGene00001603"/>
</dbReference>
<dbReference type="GeneID" id="176407"/>
<dbReference type="KEGG" id="cel:CELE_K03H1.1"/>
<dbReference type="UCSC" id="K03H1.1">
    <property type="organism name" value="c. elegans"/>
</dbReference>
<dbReference type="AGR" id="WB:WBGene00001603"/>
<dbReference type="CTD" id="176407"/>
<dbReference type="WormBase" id="K03H1.1">
    <property type="protein sequence ID" value="CE00507"/>
    <property type="gene ID" value="WBGene00001603"/>
    <property type="gene designation" value="gln-2"/>
</dbReference>
<dbReference type="eggNOG" id="KOG0683">
    <property type="taxonomic scope" value="Eukaryota"/>
</dbReference>
<dbReference type="HOGENOM" id="CLU_036762_1_1_1"/>
<dbReference type="InParanoid" id="P34497"/>
<dbReference type="OMA" id="HAVACLY"/>
<dbReference type="OrthoDB" id="1936100at2759"/>
<dbReference type="PhylomeDB" id="P34497"/>
<dbReference type="Reactome" id="R-CEL-210455">
    <property type="pathway name" value="Astrocytic Glutamate-Glutamine Uptake And Metabolism"/>
</dbReference>
<dbReference type="Reactome" id="R-CEL-8964539">
    <property type="pathway name" value="Glutamate and glutamine metabolism"/>
</dbReference>
<dbReference type="PRO" id="PR:P34497"/>
<dbReference type="Proteomes" id="UP000001940">
    <property type="component" value="Chromosome III"/>
</dbReference>
<dbReference type="Bgee" id="WBGene00001603">
    <property type="expression patterns" value="Expressed in material anatomical entity and 5 other cell types or tissues"/>
</dbReference>
<dbReference type="GO" id="GO:0005737">
    <property type="term" value="C:cytoplasm"/>
    <property type="evidence" value="ECO:0000318"/>
    <property type="project" value="GO_Central"/>
</dbReference>
<dbReference type="GO" id="GO:0005524">
    <property type="term" value="F:ATP binding"/>
    <property type="evidence" value="ECO:0007669"/>
    <property type="project" value="UniProtKB-KW"/>
</dbReference>
<dbReference type="GO" id="GO:0004356">
    <property type="term" value="F:glutamine synthetase activity"/>
    <property type="evidence" value="ECO:0000318"/>
    <property type="project" value="GO_Central"/>
</dbReference>
<dbReference type="GO" id="GO:0006542">
    <property type="term" value="P:glutamine biosynthetic process"/>
    <property type="evidence" value="ECO:0000318"/>
    <property type="project" value="GO_Central"/>
</dbReference>
<dbReference type="FunFam" id="3.10.20.70:FF:000004">
    <property type="entry name" value="Glutamine synthetase"/>
    <property type="match status" value="1"/>
</dbReference>
<dbReference type="FunFam" id="3.30.590.10:FF:000004">
    <property type="entry name" value="Glutamine synthetase"/>
    <property type="match status" value="1"/>
</dbReference>
<dbReference type="Gene3D" id="3.10.20.70">
    <property type="entry name" value="Glutamine synthetase, N-terminal domain"/>
    <property type="match status" value="1"/>
</dbReference>
<dbReference type="Gene3D" id="3.30.590.10">
    <property type="entry name" value="Glutamine synthetase/guanido kinase, catalytic domain"/>
    <property type="match status" value="1"/>
</dbReference>
<dbReference type="InterPro" id="IPR008147">
    <property type="entry name" value="Gln_synt_N"/>
</dbReference>
<dbReference type="InterPro" id="IPR036651">
    <property type="entry name" value="Gln_synt_N_sf"/>
</dbReference>
<dbReference type="InterPro" id="IPR014746">
    <property type="entry name" value="Gln_synth/guanido_kin_cat_dom"/>
</dbReference>
<dbReference type="InterPro" id="IPR008146">
    <property type="entry name" value="Gln_synth_cat_dom"/>
</dbReference>
<dbReference type="InterPro" id="IPR027302">
    <property type="entry name" value="Gln_synth_N_conserv_site"/>
</dbReference>
<dbReference type="InterPro" id="IPR050292">
    <property type="entry name" value="Glutamine_Synthetase"/>
</dbReference>
<dbReference type="PANTHER" id="PTHR20852">
    <property type="entry name" value="GLUTAMINE SYNTHETASE"/>
    <property type="match status" value="1"/>
</dbReference>
<dbReference type="PANTHER" id="PTHR20852:SF96">
    <property type="entry name" value="GLUTAMINE SYNTHETASE-RELATED"/>
    <property type="match status" value="1"/>
</dbReference>
<dbReference type="Pfam" id="PF00120">
    <property type="entry name" value="Gln-synt_C"/>
    <property type="match status" value="1"/>
</dbReference>
<dbReference type="Pfam" id="PF03951">
    <property type="entry name" value="Gln-synt_N"/>
    <property type="match status" value="1"/>
</dbReference>
<dbReference type="SMART" id="SM01230">
    <property type="entry name" value="Gln-synt_C"/>
    <property type="match status" value="1"/>
</dbReference>
<dbReference type="SUPFAM" id="SSF54368">
    <property type="entry name" value="Glutamine synthetase, N-terminal domain"/>
    <property type="match status" value="1"/>
</dbReference>
<dbReference type="SUPFAM" id="SSF55931">
    <property type="entry name" value="Glutamine synthetase/guanido kinase"/>
    <property type="match status" value="1"/>
</dbReference>
<dbReference type="PROSITE" id="PS00180">
    <property type="entry name" value="GLNA_1"/>
    <property type="match status" value="1"/>
</dbReference>
<dbReference type="PROSITE" id="PS51986">
    <property type="entry name" value="GS_BETA_GRASP"/>
    <property type="match status" value="1"/>
</dbReference>
<dbReference type="PROSITE" id="PS51987">
    <property type="entry name" value="GS_CATALYTIC"/>
    <property type="match status" value="1"/>
</dbReference>
<sequence length="367" mass="41284">MTHLNFETRMPLGTAVIDQFLGLRPHPTKIQATYVWIDGTGENLRSKTRTFDKLPKRIEDYPIWNYDGSSTGQAKGRDSDRYLRPVAAYPDPFLGGGNKLVMCDTLDHQMQPTATSHRQACAEIMHEIRDTRPWFGMEQEYLIVDRDEHPLGWPKHGFPDPQGKYYCSVGADRAFGREVVETHYRACLHAGLNIFGTNAEVTPGQWEFQIGTCEGIDMGDQLWMSRYILHRVAEQFGVCVSLDPKPKVTMGDWNGAGCHTNFSTAEMRAPGGIAAIEAAMTGLKRTHLEAMKVYDPHGGEDNLRRLTGRHETSSADKFSWGVANRGCSIRIPRQVAAERKGYLEDRRPSSNCDPYQVTAMIAQSILF</sequence>
<evidence type="ECO:0000250" key="1"/>
<evidence type="ECO:0000255" key="2">
    <source>
        <dbReference type="PROSITE-ProRule" id="PRU01330"/>
    </source>
</evidence>
<evidence type="ECO:0000255" key="3">
    <source>
        <dbReference type="PROSITE-ProRule" id="PRU01331"/>
    </source>
</evidence>
<evidence type="ECO:0000305" key="4"/>
<gene>
    <name type="primary">gln-2</name>
    <name type="ORF">K03H1.1</name>
</gene>
<reference key="1">
    <citation type="journal article" date="1994" name="Nature">
        <title>2.2 Mb of contiguous nucleotide sequence from chromosome III of C. elegans.</title>
        <authorList>
            <person name="Wilson R."/>
            <person name="Ainscough R."/>
            <person name="Anderson K."/>
            <person name="Baynes C."/>
            <person name="Berks M."/>
            <person name="Bonfield J."/>
            <person name="Burton J."/>
            <person name="Connell M."/>
            <person name="Copsey T."/>
            <person name="Cooper J."/>
            <person name="Coulson A."/>
            <person name="Craxton M."/>
            <person name="Dear S."/>
            <person name="Du Z."/>
            <person name="Durbin R."/>
            <person name="Favello A."/>
            <person name="Fraser A."/>
            <person name="Fulton L."/>
            <person name="Gardner A."/>
            <person name="Green P."/>
            <person name="Hawkins T."/>
            <person name="Hillier L."/>
            <person name="Jier M."/>
            <person name="Johnston L."/>
            <person name="Jones M."/>
            <person name="Kershaw J."/>
            <person name="Kirsten J."/>
            <person name="Laisster N."/>
            <person name="Latreille P."/>
            <person name="Lightning J."/>
            <person name="Lloyd C."/>
            <person name="Mortimore B."/>
            <person name="O'Callaghan M."/>
            <person name="Parsons J."/>
            <person name="Percy C."/>
            <person name="Rifken L."/>
            <person name="Roopra A."/>
            <person name="Saunders D."/>
            <person name="Shownkeen R."/>
            <person name="Sims M."/>
            <person name="Smaldon N."/>
            <person name="Smith A."/>
            <person name="Smith M."/>
            <person name="Sonnhammer E."/>
            <person name="Staden R."/>
            <person name="Sulston J."/>
            <person name="Thierry-Mieg J."/>
            <person name="Thomas K."/>
            <person name="Vaudin M."/>
            <person name="Vaughan K."/>
            <person name="Waterston R."/>
            <person name="Watson A."/>
            <person name="Weinstock L."/>
            <person name="Wilkinson-Sproat J."/>
            <person name="Wohldman P."/>
        </authorList>
    </citation>
    <scope>NUCLEOTIDE SEQUENCE [LARGE SCALE GENOMIC DNA]</scope>
    <source>
        <strain>Bristol N2</strain>
    </source>
</reference>
<reference key="2">
    <citation type="journal article" date="1998" name="Science">
        <title>Genome sequence of the nematode C. elegans: a platform for investigating biology.</title>
        <authorList>
            <consortium name="The C. elegans sequencing consortium"/>
        </authorList>
    </citation>
    <scope>NUCLEOTIDE SEQUENCE [LARGE SCALE GENOMIC DNA]</scope>
    <source>
        <strain>Bristol N2</strain>
    </source>
</reference>
<organism>
    <name type="scientific">Caenorhabditis elegans</name>
    <dbReference type="NCBI Taxonomy" id="6239"/>
    <lineage>
        <taxon>Eukaryota</taxon>
        <taxon>Metazoa</taxon>
        <taxon>Ecdysozoa</taxon>
        <taxon>Nematoda</taxon>
        <taxon>Chromadorea</taxon>
        <taxon>Rhabditida</taxon>
        <taxon>Rhabditina</taxon>
        <taxon>Rhabditomorpha</taxon>
        <taxon>Rhabditoidea</taxon>
        <taxon>Rhabditidae</taxon>
        <taxon>Peloderinae</taxon>
        <taxon>Caenorhabditis</taxon>
    </lineage>
</organism>
<keyword id="KW-0067">ATP-binding</keyword>
<keyword id="KW-0963">Cytoplasm</keyword>
<keyword id="KW-0436">Ligase</keyword>
<keyword id="KW-0547">Nucleotide-binding</keyword>
<keyword id="KW-1185">Reference proteome</keyword>
<comment type="catalytic activity">
    <reaction>
        <text>L-glutamate + NH4(+) + ATP = L-glutamine + ADP + phosphate + H(+)</text>
        <dbReference type="Rhea" id="RHEA:16169"/>
        <dbReference type="ChEBI" id="CHEBI:15378"/>
        <dbReference type="ChEBI" id="CHEBI:28938"/>
        <dbReference type="ChEBI" id="CHEBI:29985"/>
        <dbReference type="ChEBI" id="CHEBI:30616"/>
        <dbReference type="ChEBI" id="CHEBI:43474"/>
        <dbReference type="ChEBI" id="CHEBI:58359"/>
        <dbReference type="ChEBI" id="CHEBI:456216"/>
        <dbReference type="EC" id="6.3.1.2"/>
    </reaction>
</comment>
<comment type="subunit">
    <text evidence="1">Homooctamer.</text>
</comment>
<comment type="subcellular location">
    <subcellularLocation>
        <location evidence="1">Cytoplasm</location>
    </subcellularLocation>
</comment>
<comment type="similarity">
    <text evidence="4">Belongs to the glutamine synthetase family.</text>
</comment>